<sequence length="168" mass="17835">MSQTVHFQGNPVTVANSIPQAGSKAQTFTLVAKDLSDVTLGQFAGKRKVLNIFPSIDTGVCAASVRKFNQLATEIDNTVVLCISADLPFAQSRFCGAEGLNNVITLSTFRNAEFLQAYGVAIADGPLKGLAARAVVVIDENDNVIFSQLVDEITTEPDYEAALAVLKA</sequence>
<gene>
    <name evidence="1" type="primary">tpx</name>
    <name type="synonym">yzzJ</name>
    <name type="ordered locus">b1324</name>
    <name type="ordered locus">JW1317</name>
</gene>
<protein>
    <recommendedName>
        <fullName evidence="1 10">Thiol peroxidase</fullName>
        <shortName evidence="1">Tpx</shortName>
        <ecNumber evidence="1 2">1.11.1.24</ecNumber>
    </recommendedName>
    <alternativeName>
        <fullName evidence="1">Peroxiredoxin tpx</fullName>
        <shortName evidence="1">Prx</shortName>
    </alternativeName>
    <alternativeName>
        <fullName evidence="11">Scavengase p20</fullName>
    </alternativeName>
    <alternativeName>
        <fullName evidence="1">Thioredoxin peroxidase</fullName>
    </alternativeName>
    <alternativeName>
        <fullName evidence="1">Thioredoxin-dependent peroxiredoxin</fullName>
    </alternativeName>
</protein>
<accession>P0A862</accession>
<accession>P37901</accession>
<accession>P57669</accession>
<accession>P76047</accession>
<accession>P77786</accession>
<proteinExistence type="evidence at protein level"/>
<reference key="1">
    <citation type="journal article" date="1995" name="J. Biol. Chem.">
        <title>Thioredoxin-linked 'thiol peroxidase' from periplasmic space of Escherichia coli.</title>
        <authorList>
            <person name="Cha M.-K."/>
            <person name="Kim H.-K."/>
            <person name="Kim I.-H."/>
        </authorList>
    </citation>
    <scope>NUCLEOTIDE SEQUENCE [GENOMIC DNA]</scope>
    <scope>PARTIAL PROTEIN SEQUENCE</scope>
    <scope>SUBCELLULAR LOCATION</scope>
    <source>
        <strain>K12</strain>
    </source>
</reference>
<reference key="2">
    <citation type="journal article" date="1997" name="Biochem. Biophys. Res. Commun.">
        <title>Bacterial scavengase p20 is structurally and functionally related to peroxiredoxins.</title>
        <authorList>
            <person name="Zhou Y."/>
            <person name="Wan X.Y."/>
            <person name="Wang H.L."/>
            <person name="Yan Z.Y."/>
            <person name="Hou Y.D."/>
            <person name="Jin D.Y."/>
        </authorList>
    </citation>
    <scope>NUCLEOTIDE SEQUENCE [GENOMIC DNA]</scope>
    <source>
        <strain>K12 / DH5-alpha</strain>
    </source>
</reference>
<reference key="3">
    <citation type="journal article" date="1996" name="DNA Res.">
        <title>A 570-kb DNA sequence of the Escherichia coli K-12 genome corresponding to the 28.0-40.1 min region on the linkage map.</title>
        <authorList>
            <person name="Aiba H."/>
            <person name="Baba T."/>
            <person name="Fujita K."/>
            <person name="Hayashi K."/>
            <person name="Inada T."/>
            <person name="Isono K."/>
            <person name="Itoh T."/>
            <person name="Kasai H."/>
            <person name="Kashimoto K."/>
            <person name="Kimura S."/>
            <person name="Kitakawa M."/>
            <person name="Kitagawa M."/>
            <person name="Makino K."/>
            <person name="Miki T."/>
            <person name="Mizobuchi K."/>
            <person name="Mori H."/>
            <person name="Mori T."/>
            <person name="Motomura K."/>
            <person name="Nakade S."/>
            <person name="Nakamura Y."/>
            <person name="Nashimoto H."/>
            <person name="Nishio Y."/>
            <person name="Oshima T."/>
            <person name="Saito N."/>
            <person name="Sampei G."/>
            <person name="Seki Y."/>
            <person name="Sivasundaram S."/>
            <person name="Tagami H."/>
            <person name="Takeda J."/>
            <person name="Takemoto K."/>
            <person name="Takeuchi Y."/>
            <person name="Wada C."/>
            <person name="Yamamoto Y."/>
            <person name="Horiuchi T."/>
        </authorList>
    </citation>
    <scope>NUCLEOTIDE SEQUENCE [LARGE SCALE GENOMIC DNA]</scope>
    <source>
        <strain>K12 / W3110 / ATCC 27325 / DSM 5911</strain>
    </source>
</reference>
<reference key="4">
    <citation type="journal article" date="1997" name="Science">
        <title>The complete genome sequence of Escherichia coli K-12.</title>
        <authorList>
            <person name="Blattner F.R."/>
            <person name="Plunkett G. III"/>
            <person name="Bloch C.A."/>
            <person name="Perna N.T."/>
            <person name="Burland V."/>
            <person name="Riley M."/>
            <person name="Collado-Vides J."/>
            <person name="Glasner J.D."/>
            <person name="Rode C.K."/>
            <person name="Mayhew G.F."/>
            <person name="Gregor J."/>
            <person name="Davis N.W."/>
            <person name="Kirkpatrick H.A."/>
            <person name="Goeden M.A."/>
            <person name="Rose D.J."/>
            <person name="Mau B."/>
            <person name="Shao Y."/>
        </authorList>
    </citation>
    <scope>NUCLEOTIDE SEQUENCE [LARGE SCALE GENOMIC DNA]</scope>
    <source>
        <strain>K12 / MG1655 / ATCC 47076</strain>
    </source>
</reference>
<reference key="5">
    <citation type="journal article" date="2006" name="Mol. Syst. Biol.">
        <title>Highly accurate genome sequences of Escherichia coli K-12 strains MG1655 and W3110.</title>
        <authorList>
            <person name="Hayashi K."/>
            <person name="Morooka N."/>
            <person name="Yamamoto Y."/>
            <person name="Fujita K."/>
            <person name="Isono K."/>
            <person name="Choi S."/>
            <person name="Ohtsubo E."/>
            <person name="Baba T."/>
            <person name="Wanner B.L."/>
            <person name="Mori H."/>
            <person name="Horiuchi T."/>
        </authorList>
    </citation>
    <scope>NUCLEOTIDE SEQUENCE [LARGE SCALE GENOMIC DNA]</scope>
    <source>
        <strain>K12 / W3110 / ATCC 27325 / DSM 5911</strain>
    </source>
</reference>
<reference key="6">
    <citation type="submission" date="1994-09" db="UniProtKB">
        <authorList>
            <person name="Pasquali C."/>
            <person name="Sanchez J.-C."/>
            <person name="Ravier F."/>
            <person name="Golaz O."/>
            <person name="Hughes G.J."/>
            <person name="Frutiger S."/>
            <person name="Paquet N."/>
            <person name="Wilkins M."/>
            <person name="Appel R.D."/>
            <person name="Bairoch A."/>
            <person name="Hochstrasser D.F."/>
        </authorList>
    </citation>
    <scope>PROTEIN SEQUENCE OF 2-19</scope>
    <source>
        <strain>K12 / W3110 / ATCC 27325 / DSM 5911</strain>
    </source>
</reference>
<reference key="7">
    <citation type="journal article" date="1997" name="Electrophoresis">
        <title>Comparing the predicted and observed properties of proteins encoded in the genome of Escherichia coli K-12.</title>
        <authorList>
            <person name="Link A.J."/>
            <person name="Robison K."/>
            <person name="Church G.M."/>
        </authorList>
    </citation>
    <scope>PROTEIN SEQUENCE OF 2-16</scope>
    <source>
        <strain>K12 / EMG2</strain>
    </source>
</reference>
<reference key="8">
    <citation type="journal article" date="2003" name="J. Biol. Chem.">
        <title>Catalytic mechanism of thiol peroxidase from Escherichia coli. Sulfenic acid formation and overoxidation of essential CYS61.</title>
        <authorList>
            <person name="Baker L.M."/>
            <person name="Poole L.B."/>
        </authorList>
    </citation>
    <scope>FUNCTION</scope>
    <scope>CATALYTIC ACTIVITY</scope>
    <scope>BIOPHYSICOCHEMICAL PROPERTIES</scope>
    <scope>ACTIVE SITE</scope>
    <scope>MUTAGENESIS OF CYS-61; CYS-82 AND CYS-95</scope>
</reference>
<reference key="9">
    <citation type="journal article" date="2004" name="J. Biol. Chem.">
        <title>Escherichia coli periplasmic thiol peroxidase acts as lipid hydroperoxide peroxidase and the principal antioxidative function during anaerobic growth.</title>
        <authorList>
            <person name="Cha M.K."/>
            <person name="Kim W.C."/>
            <person name="Lim C.J."/>
            <person name="Kim K."/>
            <person name="Kim I.H."/>
        </authorList>
    </citation>
    <scope>FUNCTION</scope>
</reference>
<reference key="10">
    <citation type="journal article" date="2008" name="FEMS Microbiol. Lett.">
        <title>Subcellular localization and in vivo oxidation-reduction kinetics of thiol peroxidase in Escherichia coli.</title>
        <authorList>
            <person name="Tao K."/>
        </authorList>
    </citation>
    <scope>SUBCELLULAR LOCATION</scope>
</reference>
<reference key="11">
    <citation type="journal article" date="2003" name="J. Biol. Chem.">
        <title>Crystal structure of Escherichia coli thiol peroxidase in the oxidized state: insights into intramolecular disulfide formation and substrate binding in atypical 2-Cys peroxiredoxins.</title>
        <authorList>
            <person name="Choi J."/>
            <person name="Choi S."/>
            <person name="Choi J."/>
            <person name="Cha M.K."/>
            <person name="Kim I.H."/>
            <person name="Shin W."/>
        </authorList>
    </citation>
    <scope>X-RAY CRYSTALLOGRAPHY (2.20 ANGSTROMS)</scope>
    <scope>DISULFIDE BOND</scope>
</reference>
<reference key="12">
    <citation type="journal article" date="2009" name="J. Mol. Biol.">
        <title>Structural changes common to catalysis in the Tpx peroxiredoxin subfamily.</title>
        <authorList>
            <person name="Hall A."/>
            <person name="Sankaran B."/>
            <person name="Poole L.B."/>
            <person name="Karplus P.A."/>
        </authorList>
    </citation>
    <scope>X-RAY CRYSTALLOGRAPHY (1.75 ANGSTROMS)</scope>
    <scope>DISULFIDE BOND</scope>
    <scope>SUBUNIT</scope>
</reference>
<reference key="13">
    <citation type="journal article" date="2012" name="Acta Crystallogr. F">
        <title>The structure of an orthorhombic crystal form of a 'forced reduced' thiol peroxidase reveals lattice formation aided by the presence of the affinity tag.</title>
        <authorList>
            <person name="Beckham K.S."/>
            <person name="Byron O."/>
            <person name="Roe A.J."/>
            <person name="Gabrielsen M."/>
        </authorList>
    </citation>
    <scope>X-RAY CRYSTALLOGRAPHY (1.97 ANGSTROMS) OF 1-168</scope>
</reference>
<dbReference type="EC" id="1.11.1.24" evidence="1 2"/>
<dbReference type="EMBL" id="U33213">
    <property type="protein sequence ID" value="AAC43517.1"/>
    <property type="molecule type" value="Genomic_DNA"/>
</dbReference>
<dbReference type="EMBL" id="U93212">
    <property type="protein sequence ID" value="AAC45284.1"/>
    <property type="molecule type" value="Genomic_DNA"/>
</dbReference>
<dbReference type="EMBL" id="U00096">
    <property type="protein sequence ID" value="AAC74406.1"/>
    <property type="molecule type" value="Genomic_DNA"/>
</dbReference>
<dbReference type="EMBL" id="AP009048">
    <property type="protein sequence ID" value="BAA14906.2"/>
    <property type="molecule type" value="Genomic_DNA"/>
</dbReference>
<dbReference type="PIR" id="JC5504">
    <property type="entry name" value="JC5504"/>
</dbReference>
<dbReference type="RefSeq" id="NP_415840.1">
    <property type="nucleotide sequence ID" value="NC_000913.3"/>
</dbReference>
<dbReference type="RefSeq" id="WP_000084387.1">
    <property type="nucleotide sequence ID" value="NZ_STEB01000005.1"/>
</dbReference>
<dbReference type="PDB" id="1QXH">
    <property type="method" value="X-ray"/>
    <property type="resolution" value="2.20 A"/>
    <property type="chains" value="A/B=2-168"/>
</dbReference>
<dbReference type="PDB" id="3HVS">
    <property type="method" value="X-ray"/>
    <property type="resolution" value="1.80 A"/>
    <property type="chains" value="A/B=2-168"/>
</dbReference>
<dbReference type="PDB" id="3HVV">
    <property type="method" value="X-ray"/>
    <property type="resolution" value="1.75 A"/>
    <property type="chains" value="A=2-168"/>
</dbReference>
<dbReference type="PDB" id="3HVX">
    <property type="method" value="X-ray"/>
    <property type="resolution" value="2.12 A"/>
    <property type="chains" value="A/B/C/D=2-168"/>
</dbReference>
<dbReference type="PDB" id="3I43">
    <property type="method" value="X-ray"/>
    <property type="resolution" value="2.80 A"/>
    <property type="chains" value="A/B=2-168"/>
</dbReference>
<dbReference type="PDB" id="4AF2">
    <property type="method" value="X-ray"/>
    <property type="resolution" value="1.97 A"/>
    <property type="chains" value="A=1-168"/>
</dbReference>
<dbReference type="PDBsum" id="1QXH"/>
<dbReference type="PDBsum" id="3HVS"/>
<dbReference type="PDBsum" id="3HVV"/>
<dbReference type="PDBsum" id="3HVX"/>
<dbReference type="PDBsum" id="3I43"/>
<dbReference type="PDBsum" id="4AF2"/>
<dbReference type="SMR" id="P0A862"/>
<dbReference type="BioGRID" id="4260151">
    <property type="interactions" value="147"/>
</dbReference>
<dbReference type="BioGRID" id="850247">
    <property type="interactions" value="3"/>
</dbReference>
<dbReference type="DIP" id="DIP-31857N"/>
<dbReference type="FunCoup" id="P0A862">
    <property type="interactions" value="284"/>
</dbReference>
<dbReference type="IntAct" id="P0A862">
    <property type="interactions" value="9"/>
</dbReference>
<dbReference type="STRING" id="511145.b1324"/>
<dbReference type="PeroxiBase" id="6007">
    <property type="entry name" value="EcoTPx"/>
</dbReference>
<dbReference type="jPOST" id="P0A862"/>
<dbReference type="PaxDb" id="511145-b1324"/>
<dbReference type="EnsemblBacteria" id="AAC74406">
    <property type="protein sequence ID" value="AAC74406"/>
    <property type="gene ID" value="b1324"/>
</dbReference>
<dbReference type="GeneID" id="75203439"/>
<dbReference type="GeneID" id="945880"/>
<dbReference type="KEGG" id="ecj:JW1317"/>
<dbReference type="KEGG" id="eco:b1324"/>
<dbReference type="KEGG" id="ecoc:C3026_07750"/>
<dbReference type="PATRIC" id="fig|1411691.4.peg.954"/>
<dbReference type="EchoBASE" id="EB2538"/>
<dbReference type="eggNOG" id="COG2077">
    <property type="taxonomic scope" value="Bacteria"/>
</dbReference>
<dbReference type="InParanoid" id="P0A862"/>
<dbReference type="OMA" id="ITQEPNY"/>
<dbReference type="OrthoDB" id="9781543at2"/>
<dbReference type="PhylomeDB" id="P0A862"/>
<dbReference type="BioCyc" id="EcoCyc:G6660-MONOMER"/>
<dbReference type="BioCyc" id="MetaCyc:G6660-MONOMER"/>
<dbReference type="BRENDA" id="1.11.1.7">
    <property type="organism ID" value="2026"/>
</dbReference>
<dbReference type="EvolutionaryTrace" id="P0A862"/>
<dbReference type="PRO" id="PR:P0A862"/>
<dbReference type="Proteomes" id="UP000000625">
    <property type="component" value="Chromosome"/>
</dbReference>
<dbReference type="GO" id="GO:0005829">
    <property type="term" value="C:cytosol"/>
    <property type="evidence" value="ECO:0000314"/>
    <property type="project" value="EcoCyc"/>
</dbReference>
<dbReference type="GO" id="GO:0042597">
    <property type="term" value="C:periplasmic space"/>
    <property type="evidence" value="ECO:0007669"/>
    <property type="project" value="UniProtKB-SubCell"/>
</dbReference>
<dbReference type="GO" id="GO:0032843">
    <property type="term" value="F:hydroperoxide reductase activity"/>
    <property type="evidence" value="ECO:0000314"/>
    <property type="project" value="EcoCyc"/>
</dbReference>
<dbReference type="GO" id="GO:0008379">
    <property type="term" value="F:thioredoxin peroxidase activity"/>
    <property type="evidence" value="ECO:0000314"/>
    <property type="project" value="EcoCyc"/>
</dbReference>
<dbReference type="GO" id="GO:0034599">
    <property type="term" value="P:cellular response to oxidative stress"/>
    <property type="evidence" value="ECO:0000315"/>
    <property type="project" value="EcoCyc"/>
</dbReference>
<dbReference type="CDD" id="cd03014">
    <property type="entry name" value="PRX_Atyp2cys"/>
    <property type="match status" value="1"/>
</dbReference>
<dbReference type="FunFam" id="3.40.30.10:FF:000056">
    <property type="entry name" value="Thiol peroxidase"/>
    <property type="match status" value="1"/>
</dbReference>
<dbReference type="Gene3D" id="3.40.30.10">
    <property type="entry name" value="Glutaredoxin"/>
    <property type="match status" value="1"/>
</dbReference>
<dbReference type="HAMAP" id="MF_00269">
    <property type="entry name" value="Tpx"/>
    <property type="match status" value="1"/>
</dbReference>
<dbReference type="InterPro" id="IPR013740">
    <property type="entry name" value="Redoxin"/>
</dbReference>
<dbReference type="InterPro" id="IPR036249">
    <property type="entry name" value="Thioredoxin-like_sf"/>
</dbReference>
<dbReference type="InterPro" id="IPR013766">
    <property type="entry name" value="Thioredoxin_domain"/>
</dbReference>
<dbReference type="InterPro" id="IPR002065">
    <property type="entry name" value="TPX"/>
</dbReference>
<dbReference type="InterPro" id="IPR018219">
    <property type="entry name" value="Tpx_CS"/>
</dbReference>
<dbReference type="InterPro" id="IPR050455">
    <property type="entry name" value="Tpx_Peroxidase_subfamily"/>
</dbReference>
<dbReference type="NCBIfam" id="NF001808">
    <property type="entry name" value="PRK00522.1"/>
    <property type="match status" value="1"/>
</dbReference>
<dbReference type="PANTHER" id="PTHR43110">
    <property type="entry name" value="THIOL PEROXIDASE"/>
    <property type="match status" value="1"/>
</dbReference>
<dbReference type="PANTHER" id="PTHR43110:SF1">
    <property type="entry name" value="THIOL PEROXIDASE"/>
    <property type="match status" value="1"/>
</dbReference>
<dbReference type="Pfam" id="PF08534">
    <property type="entry name" value="Redoxin"/>
    <property type="match status" value="1"/>
</dbReference>
<dbReference type="SUPFAM" id="SSF52833">
    <property type="entry name" value="Thioredoxin-like"/>
    <property type="match status" value="1"/>
</dbReference>
<dbReference type="PROSITE" id="PS51352">
    <property type="entry name" value="THIOREDOXIN_2"/>
    <property type="match status" value="1"/>
</dbReference>
<dbReference type="PROSITE" id="PS01265">
    <property type="entry name" value="TPX"/>
    <property type="match status" value="1"/>
</dbReference>
<evidence type="ECO:0000255" key="1">
    <source>
        <dbReference type="HAMAP-Rule" id="MF_00269"/>
    </source>
</evidence>
<evidence type="ECO:0000269" key="2">
    <source>
    </source>
</evidence>
<evidence type="ECO:0000269" key="3">
    <source>
    </source>
</evidence>
<evidence type="ECO:0000269" key="4">
    <source>
    </source>
</evidence>
<evidence type="ECO:0000269" key="5">
    <source>
    </source>
</evidence>
<evidence type="ECO:0000269" key="6">
    <source>
    </source>
</evidence>
<evidence type="ECO:0000269" key="7">
    <source>
    </source>
</evidence>
<evidence type="ECO:0000269" key="8">
    <source>
    </source>
</evidence>
<evidence type="ECO:0000269" key="9">
    <source ref="6"/>
</evidence>
<evidence type="ECO:0000303" key="10">
    <source>
    </source>
</evidence>
<evidence type="ECO:0000303" key="11">
    <source>
    </source>
</evidence>
<evidence type="ECO:0000305" key="12"/>
<evidence type="ECO:0000305" key="13">
    <source>
    </source>
</evidence>
<evidence type="ECO:0007744" key="14">
    <source>
        <dbReference type="PDB" id="1QXH"/>
    </source>
</evidence>
<evidence type="ECO:0007744" key="15">
    <source>
        <dbReference type="PDB" id="3HVS"/>
    </source>
</evidence>
<evidence type="ECO:0007744" key="16">
    <source>
        <dbReference type="PDB" id="3I43"/>
    </source>
</evidence>
<evidence type="ECO:0007829" key="17">
    <source>
        <dbReference type="PDB" id="3HVV"/>
    </source>
</evidence>
<evidence type="ECO:0007829" key="18">
    <source>
        <dbReference type="PDB" id="3HVX"/>
    </source>
</evidence>
<organism>
    <name type="scientific">Escherichia coli (strain K12)</name>
    <dbReference type="NCBI Taxonomy" id="83333"/>
    <lineage>
        <taxon>Bacteria</taxon>
        <taxon>Pseudomonadati</taxon>
        <taxon>Pseudomonadota</taxon>
        <taxon>Gammaproteobacteria</taxon>
        <taxon>Enterobacterales</taxon>
        <taxon>Enterobacteriaceae</taxon>
        <taxon>Escherichia</taxon>
    </lineage>
</organism>
<keyword id="KW-0002">3D-structure</keyword>
<keyword id="KW-0049">Antioxidant</keyword>
<keyword id="KW-0963">Cytoplasm</keyword>
<keyword id="KW-0903">Direct protein sequencing</keyword>
<keyword id="KW-1015">Disulfide bond</keyword>
<keyword id="KW-0560">Oxidoreductase</keyword>
<keyword id="KW-0574">Periplasm</keyword>
<keyword id="KW-0575">Peroxidase</keyword>
<keyword id="KW-0676">Redox-active center</keyword>
<keyword id="KW-1185">Reference proteome</keyword>
<name>TPX_ECOLI</name>
<comment type="function">
    <text evidence="1 2 4">Thiol-specific peroxidase that catalyzes the reduction of hydrogen peroxide and organic hydroperoxides to water and alcohols, respectively. Plays a role in cell protection against oxidative stress by detoxifying peroxides. Has a preference for alkyl hydroperoxides and acts as a lipid peroxidase to inhibit bacterial membrane oxidation. Acts as a principal antioxidant during anaerobic growth.</text>
</comment>
<comment type="catalytic activity">
    <reaction evidence="1 2">
        <text>a hydroperoxide + [thioredoxin]-dithiol = an alcohol + [thioredoxin]-disulfide + H2O</text>
        <dbReference type="Rhea" id="RHEA:62620"/>
        <dbReference type="Rhea" id="RHEA-COMP:10698"/>
        <dbReference type="Rhea" id="RHEA-COMP:10700"/>
        <dbReference type="ChEBI" id="CHEBI:15377"/>
        <dbReference type="ChEBI" id="CHEBI:29950"/>
        <dbReference type="ChEBI" id="CHEBI:30879"/>
        <dbReference type="ChEBI" id="CHEBI:35924"/>
        <dbReference type="ChEBI" id="CHEBI:50058"/>
        <dbReference type="EC" id="1.11.1.24"/>
    </reaction>
</comment>
<comment type="biophysicochemical properties">
    <kinetics>
        <KM evidence="2">1730 uM for H(2)O(2)</KM>
        <KM evidence="2">9.1 uM for cumene hydroperoxide</KM>
        <KM evidence="2">25.5 uM for Trx1 (using H(2)O(2) as substrate)</KM>
        <KM evidence="2">22.5 uM for Trx1 (using cumene hydroperoxide as substrate)</KM>
        <text evidence="2">kcat is 76.0 sec(-1) with H(2)O(2) as substrate and 70.1 sec(-1) with cumene hydroperoxide as substrate.</text>
    </kinetics>
</comment>
<comment type="subunit">
    <text evidence="1 6">Homodimer.</text>
</comment>
<comment type="interaction">
    <interactant intactId="EBI-369411">
        <id>P0A862</id>
    </interactant>
    <interactant intactId="EBI-9129402">
        <id>P0A8E1</id>
        <label>ycfP</label>
    </interactant>
    <organismsDiffer>false</organismsDiffer>
    <experiments>3</experiments>
</comment>
<comment type="subcellular location">
    <subcellularLocation>
        <location evidence="7">Periplasm</location>
    </subcellularLocation>
    <subcellularLocation>
        <location evidence="5">Cytoplasm</location>
    </subcellularLocation>
    <text evidence="5">Forms a mixed disulfide with cytoplasmic thioredoxin (trx1).</text>
</comment>
<comment type="miscellaneous">
    <text evidence="1 13">The active site is a conserved redox-active cysteine residue, the peroxidatic cysteine (C(P)), which makes the nucleophilic attack on the peroxide substrate. The peroxide oxidizes the C(P)-SH to cysteine sulfenic acid (C(P)-SOH), which then reacts with another cysteine residue, the resolving cysteine (C(R)), to form a disulfide bridge. The disulfide is subsequently reduced by an appropriate electron donor to complete the catalytic cycle. In this atypical 2-Cys peroxiredoxin, C(R) is present in the same subunit to form an intramolecular disulfide. The disulfide is subsequently reduced by thioredoxin.</text>
</comment>
<comment type="similarity">
    <text evidence="1 12">Belongs to the peroxiredoxin family. Tpx subfamily.</text>
</comment>
<feature type="initiator methionine" description="Removed" evidence="8 9">
    <location>
        <position position="1"/>
    </location>
</feature>
<feature type="chain" id="PRO_0000187877" description="Thiol peroxidase">
    <location>
        <begin position="2"/>
        <end position="168"/>
    </location>
</feature>
<feature type="domain" description="Thioredoxin" evidence="1">
    <location>
        <begin position="19"/>
        <end position="168"/>
    </location>
</feature>
<feature type="active site" description="Cysteine sulfenic acid (-SOH) intermediate" evidence="1 2">
    <location>
        <position position="61"/>
    </location>
</feature>
<feature type="disulfide bond" description="Redox-active" evidence="1 3 6 14 15 16">
    <location>
        <begin position="61"/>
        <end position="95"/>
    </location>
</feature>
<feature type="mutagenesis site" description="Abolishes catalytic activity." evidence="2">
    <original>C</original>
    <variation>S</variation>
    <location>
        <position position="61"/>
    </location>
</feature>
<feature type="mutagenesis site" description="Reduces catalytic activity by 28%." evidence="2">
    <original>C</original>
    <variation>S</variation>
    <location>
        <position position="82"/>
    </location>
</feature>
<feature type="mutagenesis site" description="Reduces catalytic activity by 80%." evidence="2">
    <original>C</original>
    <variation>S</variation>
    <location>
        <position position="95"/>
    </location>
</feature>
<feature type="sequence conflict" description="In Ref. 1; AAC43517." evidence="12" ref="1">
    <original>C</original>
    <variation>Y</variation>
    <location>
        <position position="61"/>
    </location>
</feature>
<feature type="strand" evidence="17">
    <location>
        <begin position="3"/>
        <end position="7"/>
    </location>
</feature>
<feature type="strand" evidence="17">
    <location>
        <begin position="10"/>
        <end position="14"/>
    </location>
</feature>
<feature type="strand" evidence="17">
    <location>
        <begin position="29"/>
        <end position="31"/>
    </location>
</feature>
<feature type="strand" evidence="17">
    <location>
        <begin position="37"/>
        <end position="39"/>
    </location>
</feature>
<feature type="helix" evidence="17">
    <location>
        <begin position="40"/>
        <end position="43"/>
    </location>
</feature>
<feature type="strand" evidence="17">
    <location>
        <begin position="46"/>
        <end position="52"/>
    </location>
</feature>
<feature type="strand" evidence="18">
    <location>
        <begin position="56"/>
        <end position="59"/>
    </location>
</feature>
<feature type="helix" evidence="17">
    <location>
        <begin position="61"/>
        <end position="71"/>
    </location>
</feature>
<feature type="helix" evidence="17">
    <location>
        <begin position="72"/>
        <end position="74"/>
    </location>
</feature>
<feature type="strand" evidence="17">
    <location>
        <begin position="75"/>
        <end position="86"/>
    </location>
</feature>
<feature type="helix" evidence="17">
    <location>
        <begin position="88"/>
        <end position="98"/>
    </location>
</feature>
<feature type="strand" evidence="17">
    <location>
        <begin position="102"/>
        <end position="107"/>
    </location>
</feature>
<feature type="helix" evidence="17">
    <location>
        <begin position="112"/>
        <end position="117"/>
    </location>
</feature>
<feature type="turn" evidence="17">
    <location>
        <begin position="126"/>
        <end position="129"/>
    </location>
</feature>
<feature type="strand" evidence="17">
    <location>
        <begin position="133"/>
        <end position="138"/>
    </location>
</feature>
<feature type="strand" evidence="17">
    <location>
        <begin position="142"/>
        <end position="149"/>
    </location>
</feature>
<feature type="helix" evidence="17">
    <location>
        <begin position="159"/>
        <end position="164"/>
    </location>
</feature>